<accession>O59397</accession>
<feature type="chain" id="PRO_0000112495" description="Putative [LysW]-L-2-aminoadipate/[LysW]-L-glutamate phosphate reductase">
    <location>
        <begin position="1"/>
        <end position="330"/>
    </location>
</feature>
<feature type="active site" evidence="1">
    <location>
        <position position="142"/>
    </location>
</feature>
<feature type="binding site" evidence="1">
    <location>
        <begin position="10"/>
        <end position="13"/>
    </location>
    <ligand>
        <name>NADP(+)</name>
        <dbReference type="ChEBI" id="CHEBI:58349"/>
    </ligand>
</feature>
<feature type="binding site" evidence="1">
    <location>
        <position position="297"/>
    </location>
    <ligand>
        <name>NADP(+)</name>
        <dbReference type="ChEBI" id="CHEBI:58349"/>
    </ligand>
</feature>
<sequence length="330" mass="37168">MIKVAIVGGSGYIGGELIRLLAMHPEVEIVAVTSREYAGKKVHKVHPNLRGLNLRFTSDYNFDADVIFLAVPHGVSMKLINEFLGSAKIIDLSADFRVRKELYEKYYGKHERPELIEDFVYGLPEIHRKEIKKAELVANPGCNATAVILALYPFKDLTKEVLVDLKVSSSAGGRRENLPSIHPERSNVVRVYKPYHHRHEAEVLQETGVRAMFTVHSVDIVRGLLATIYFTFEGNEKDLLKRMLIYKDEPFIRLVVDKGGLQRYPDPKYVLGSNFVDLGLAYDEENSRVIVFSALDNLIKGGAGQAVQNMNIMFGLDETLGLGYYPLYPV</sequence>
<keyword id="KW-0028">Amino-acid biosynthesis</keyword>
<keyword id="KW-0055">Arginine biosynthesis</keyword>
<keyword id="KW-0963">Cytoplasm</keyword>
<keyword id="KW-0457">Lysine biosynthesis</keyword>
<keyword id="KW-0521">NADP</keyword>
<keyword id="KW-0560">Oxidoreductase</keyword>
<proteinExistence type="inferred from homology"/>
<comment type="function">
    <text evidence="1">Involved in both the arginine and lysine biosynthetic pathways.</text>
</comment>
<comment type="catalytic activity">
    <reaction evidence="1">
        <text>[amino-group carrier protein]-C-terminal-N-(1-carboxy-5-oxopentan-1-yl)-L-glutamine + phosphate + NADP(+) = [amino-group carrier protein]-C-terminal-N-(1-carboxy-5-phosphooxy-5-oxopentan-1-yl)-L-glutamine + NADPH + H(+)</text>
        <dbReference type="Rhea" id="RHEA:41948"/>
        <dbReference type="Rhea" id="RHEA-COMP:9712"/>
        <dbReference type="Rhea" id="RHEA-COMP:9714"/>
        <dbReference type="ChEBI" id="CHEBI:15378"/>
        <dbReference type="ChEBI" id="CHEBI:43474"/>
        <dbReference type="ChEBI" id="CHEBI:57783"/>
        <dbReference type="ChEBI" id="CHEBI:58349"/>
        <dbReference type="ChEBI" id="CHEBI:78499"/>
        <dbReference type="ChEBI" id="CHEBI:78501"/>
        <dbReference type="EC" id="1.2.1.103"/>
    </reaction>
</comment>
<comment type="catalytic activity">
    <reaction evidence="1">
        <text>[amino-group carrier protein]-C-terminal-gamma-(L-glutamyl-5-semialdehyde)-L-glutamate + phosphate + NADP(+) = [amino-group carrier protein]-C-terminal-gamma-(5-phospho-L-glutamyl)-L-glutamate + NADPH + H(+)</text>
        <dbReference type="Rhea" id="RHEA:52668"/>
        <dbReference type="Rhea" id="RHEA-COMP:13313"/>
        <dbReference type="Rhea" id="RHEA-COMP:13327"/>
        <dbReference type="ChEBI" id="CHEBI:15378"/>
        <dbReference type="ChEBI" id="CHEBI:43474"/>
        <dbReference type="ChEBI" id="CHEBI:57783"/>
        <dbReference type="ChEBI" id="CHEBI:58349"/>
        <dbReference type="ChEBI" id="CHEBI:136717"/>
        <dbReference type="ChEBI" id="CHEBI:136761"/>
        <dbReference type="EC" id="1.2.1.106"/>
    </reaction>
</comment>
<comment type="pathway">
    <text evidence="1">Amino-acid biosynthesis; L-lysine biosynthesis via AAA pathway; L-lysine from L-alpha-aminoadipate (Thermus route): step 3/5.</text>
</comment>
<comment type="pathway">
    <text evidence="1">Amino-acid biosynthesis; L-arginine biosynthesis.</text>
</comment>
<comment type="subcellular location">
    <subcellularLocation>
        <location evidence="1">Cytoplasm</location>
    </subcellularLocation>
</comment>
<comment type="similarity">
    <text evidence="1">Belongs to the NAGSA dehydrogenase family. Type 1 subfamily. LysY sub-subfamily.</text>
</comment>
<reference key="1">
    <citation type="journal article" date="1998" name="DNA Res.">
        <title>Complete sequence and gene organization of the genome of a hyper-thermophilic archaebacterium, Pyrococcus horikoshii OT3.</title>
        <authorList>
            <person name="Kawarabayasi Y."/>
            <person name="Sawada M."/>
            <person name="Horikawa H."/>
            <person name="Haikawa Y."/>
            <person name="Hino Y."/>
            <person name="Yamamoto S."/>
            <person name="Sekine M."/>
            <person name="Baba S."/>
            <person name="Kosugi H."/>
            <person name="Hosoyama A."/>
            <person name="Nagai Y."/>
            <person name="Sakai M."/>
            <person name="Ogura K."/>
            <person name="Otsuka R."/>
            <person name="Nakazawa H."/>
            <person name="Takamiya M."/>
            <person name="Ohfuku Y."/>
            <person name="Funahashi T."/>
            <person name="Tanaka T."/>
            <person name="Kudoh Y."/>
            <person name="Yamazaki J."/>
            <person name="Kushida N."/>
            <person name="Oguchi A."/>
            <person name="Aoki K."/>
            <person name="Yoshizawa T."/>
            <person name="Nakamura Y."/>
            <person name="Robb F.T."/>
            <person name="Horikoshi K."/>
            <person name="Masuchi Y."/>
            <person name="Shizuya H."/>
            <person name="Kikuchi H."/>
        </authorList>
    </citation>
    <scope>NUCLEOTIDE SEQUENCE [LARGE SCALE GENOMIC DNA]</scope>
    <source>
        <strain>ATCC 700860 / DSM 12428 / JCM 9974 / NBRC 100139 / OT-3</strain>
    </source>
</reference>
<protein>
    <recommendedName>
        <fullName evidence="1">Putative [LysW]-L-2-aminoadipate/[LysW]-L-glutamate phosphate reductase</fullName>
        <ecNumber evidence="1">1.2.1.103</ecNumber>
        <ecNumber evidence="1">1.2.1.106</ecNumber>
    </recommendedName>
</protein>
<name>LYSY_PYRHO</name>
<dbReference type="EC" id="1.2.1.103" evidence="1"/>
<dbReference type="EC" id="1.2.1.106" evidence="1"/>
<dbReference type="EMBL" id="BA000001">
    <property type="protein sequence ID" value="BAA30834.1"/>
    <property type="molecule type" value="Genomic_DNA"/>
</dbReference>
<dbReference type="PIR" id="C71180">
    <property type="entry name" value="C71180"/>
</dbReference>
<dbReference type="RefSeq" id="WP_010885784.1">
    <property type="nucleotide sequence ID" value="NC_000961.1"/>
</dbReference>
<dbReference type="SMR" id="O59397"/>
<dbReference type="STRING" id="70601.gene:9378716"/>
<dbReference type="EnsemblBacteria" id="BAA30834">
    <property type="protein sequence ID" value="BAA30834"/>
    <property type="gene ID" value="BAA30834"/>
</dbReference>
<dbReference type="GeneID" id="1442565"/>
<dbReference type="KEGG" id="pho:PH1720"/>
<dbReference type="eggNOG" id="arCOG00495">
    <property type="taxonomic scope" value="Archaea"/>
</dbReference>
<dbReference type="OrthoDB" id="372053at2157"/>
<dbReference type="UniPathway" id="UPA00033">
    <property type="reaction ID" value="UER00037"/>
</dbReference>
<dbReference type="UniPathway" id="UPA00068"/>
<dbReference type="Proteomes" id="UP000000752">
    <property type="component" value="Chromosome"/>
</dbReference>
<dbReference type="GO" id="GO:0005737">
    <property type="term" value="C:cytoplasm"/>
    <property type="evidence" value="ECO:0007669"/>
    <property type="project" value="UniProtKB-SubCell"/>
</dbReference>
<dbReference type="GO" id="GO:0043870">
    <property type="term" value="F:N-acetyl-gamma-aminoadipyl-phosphate reductase activity"/>
    <property type="evidence" value="ECO:0007669"/>
    <property type="project" value="RHEA"/>
</dbReference>
<dbReference type="GO" id="GO:0003942">
    <property type="term" value="F:N-acetyl-gamma-glutamyl-phosphate reductase activity"/>
    <property type="evidence" value="ECO:0007669"/>
    <property type="project" value="InterPro"/>
</dbReference>
<dbReference type="GO" id="GO:0051287">
    <property type="term" value="F:NAD binding"/>
    <property type="evidence" value="ECO:0007669"/>
    <property type="project" value="InterPro"/>
</dbReference>
<dbReference type="GO" id="GO:0070401">
    <property type="term" value="F:NADP+ binding"/>
    <property type="evidence" value="ECO:0007669"/>
    <property type="project" value="InterPro"/>
</dbReference>
<dbReference type="GO" id="GO:0042450">
    <property type="term" value="P:arginine biosynthetic process via ornithine"/>
    <property type="evidence" value="ECO:0007669"/>
    <property type="project" value="UniProtKB-UniRule"/>
</dbReference>
<dbReference type="GO" id="GO:0006526">
    <property type="term" value="P:L-arginine biosynthetic process"/>
    <property type="evidence" value="ECO:0007669"/>
    <property type="project" value="UniProtKB-UniPathway"/>
</dbReference>
<dbReference type="GO" id="GO:0019878">
    <property type="term" value="P:lysine biosynthetic process via aminoadipic acid"/>
    <property type="evidence" value="ECO:0007669"/>
    <property type="project" value="UniProtKB-UniRule"/>
</dbReference>
<dbReference type="CDD" id="cd23939">
    <property type="entry name" value="AGPR_1_C_LysY"/>
    <property type="match status" value="1"/>
</dbReference>
<dbReference type="CDD" id="cd17895">
    <property type="entry name" value="AGPR_1_N"/>
    <property type="match status" value="1"/>
</dbReference>
<dbReference type="Gene3D" id="3.30.360.10">
    <property type="entry name" value="Dihydrodipicolinate Reductase, domain 2"/>
    <property type="match status" value="1"/>
</dbReference>
<dbReference type="Gene3D" id="3.40.50.720">
    <property type="entry name" value="NAD(P)-binding Rossmann-like Domain"/>
    <property type="match status" value="1"/>
</dbReference>
<dbReference type="HAMAP" id="MF_00150">
    <property type="entry name" value="ArgC_type1"/>
    <property type="match status" value="1"/>
</dbReference>
<dbReference type="HAMAP" id="MF_02083">
    <property type="entry name" value="LysY"/>
    <property type="match status" value="1"/>
</dbReference>
<dbReference type="InterPro" id="IPR023013">
    <property type="entry name" value="AGPR_AS"/>
</dbReference>
<dbReference type="InterPro" id="IPR000706">
    <property type="entry name" value="AGPR_type-1"/>
</dbReference>
<dbReference type="InterPro" id="IPR037535">
    <property type="entry name" value="LysY"/>
</dbReference>
<dbReference type="InterPro" id="IPR036291">
    <property type="entry name" value="NAD(P)-bd_dom_sf"/>
</dbReference>
<dbReference type="InterPro" id="IPR050085">
    <property type="entry name" value="NAGSA_dehydrogenase"/>
</dbReference>
<dbReference type="InterPro" id="IPR000534">
    <property type="entry name" value="Semialdehyde_DH_NAD-bd"/>
</dbReference>
<dbReference type="NCBIfam" id="TIGR01850">
    <property type="entry name" value="argC"/>
    <property type="match status" value="1"/>
</dbReference>
<dbReference type="PANTHER" id="PTHR32338:SF11">
    <property type="entry name" value="[LYSW]-L-2-AMINOADIPATE_[LYSW]-L-GLUTAMATE PHOSPHATE REDUCTASE-RELATED"/>
    <property type="match status" value="1"/>
</dbReference>
<dbReference type="PANTHER" id="PTHR32338">
    <property type="entry name" value="N-ACETYL-GAMMA-GLUTAMYL-PHOSPHATE REDUCTASE, CHLOROPLASTIC-RELATED-RELATED"/>
    <property type="match status" value="1"/>
</dbReference>
<dbReference type="Pfam" id="PF01118">
    <property type="entry name" value="Semialdhyde_dh"/>
    <property type="match status" value="1"/>
</dbReference>
<dbReference type="Pfam" id="PF22698">
    <property type="entry name" value="Semialdhyde_dhC_1"/>
    <property type="match status" value="1"/>
</dbReference>
<dbReference type="SMART" id="SM00859">
    <property type="entry name" value="Semialdhyde_dh"/>
    <property type="match status" value="1"/>
</dbReference>
<dbReference type="SUPFAM" id="SSF55347">
    <property type="entry name" value="Glyceraldehyde-3-phosphate dehydrogenase-like, C-terminal domain"/>
    <property type="match status" value="1"/>
</dbReference>
<dbReference type="SUPFAM" id="SSF51735">
    <property type="entry name" value="NAD(P)-binding Rossmann-fold domains"/>
    <property type="match status" value="1"/>
</dbReference>
<dbReference type="PROSITE" id="PS01224">
    <property type="entry name" value="ARGC"/>
    <property type="match status" value="1"/>
</dbReference>
<gene>
    <name evidence="1" type="primary">lysY</name>
    <name type="synonym">argC</name>
    <name type="ordered locus">PH1720</name>
</gene>
<organism>
    <name type="scientific">Pyrococcus horikoshii (strain ATCC 700860 / DSM 12428 / JCM 9974 / NBRC 100139 / OT-3)</name>
    <dbReference type="NCBI Taxonomy" id="70601"/>
    <lineage>
        <taxon>Archaea</taxon>
        <taxon>Methanobacteriati</taxon>
        <taxon>Methanobacteriota</taxon>
        <taxon>Thermococci</taxon>
        <taxon>Thermococcales</taxon>
        <taxon>Thermococcaceae</taxon>
        <taxon>Pyrococcus</taxon>
    </lineage>
</organism>
<evidence type="ECO:0000255" key="1">
    <source>
        <dbReference type="HAMAP-Rule" id="MF_02083"/>
    </source>
</evidence>